<feature type="chain" id="PRO_0000223435" description="Urease accessory protein UreE">
    <location>
        <begin position="1"/>
        <end position="182"/>
    </location>
</feature>
<feature type="region of interest" description="Disordered" evidence="2">
    <location>
        <begin position="128"/>
        <end position="182"/>
    </location>
</feature>
<feature type="compositionally biased region" description="Basic and acidic residues" evidence="2">
    <location>
        <begin position="146"/>
        <end position="162"/>
    </location>
</feature>
<feature type="compositionally biased region" description="Acidic residues" evidence="2">
    <location>
        <begin position="173"/>
        <end position="182"/>
    </location>
</feature>
<feature type="sequence conflict" description="In Ref. 1; AAF24256." evidence="3" ref="1">
    <original>C</original>
    <variation>W</variation>
    <location>
        <position position="60"/>
    </location>
</feature>
<accession>Q3J156</accession>
<accession>Q9RFF1</accession>
<evidence type="ECO:0000255" key="1">
    <source>
        <dbReference type="HAMAP-Rule" id="MF_00822"/>
    </source>
</evidence>
<evidence type="ECO:0000256" key="2">
    <source>
        <dbReference type="SAM" id="MobiDB-lite"/>
    </source>
</evidence>
<evidence type="ECO:0000305" key="3"/>
<gene>
    <name evidence="1" type="primary">ureE</name>
    <name type="ordered locus">RHOS4_19100</name>
    <name type="ORF">RSP_0304</name>
</gene>
<keyword id="KW-0143">Chaperone</keyword>
<keyword id="KW-0963">Cytoplasm</keyword>
<keyword id="KW-0533">Nickel</keyword>
<keyword id="KW-0996">Nickel insertion</keyword>
<keyword id="KW-1185">Reference proteome</keyword>
<comment type="function">
    <text evidence="1">Involved in urease metallocenter assembly. Binds nickel. Probably functions as a nickel donor during metallocenter assembly.</text>
</comment>
<comment type="subcellular location">
    <subcellularLocation>
        <location evidence="1">Cytoplasm</location>
    </subcellularLocation>
</comment>
<comment type="similarity">
    <text evidence="1">Belongs to the UreE family.</text>
</comment>
<organism>
    <name type="scientific">Cereibacter sphaeroides (strain ATCC 17023 / DSM 158 / JCM 6121 / CCUG 31486 / LMG 2827 / NBRC 12203 / NCIMB 8253 / ATH 2.4.1.)</name>
    <name type="common">Rhodobacter sphaeroides</name>
    <dbReference type="NCBI Taxonomy" id="272943"/>
    <lineage>
        <taxon>Bacteria</taxon>
        <taxon>Pseudomonadati</taxon>
        <taxon>Pseudomonadota</taxon>
        <taxon>Alphaproteobacteria</taxon>
        <taxon>Rhodobacterales</taxon>
        <taxon>Paracoccaceae</taxon>
        <taxon>Cereibacter</taxon>
    </lineage>
</organism>
<sequence length="182" mass="20168">MTELPQARRLLKQGEWTGPAAGCVRLGYDERFLRRKRLETEAGDGFLVDLAETTSLDEGCAFELADGRLVEVRAAEEEVVAVTGPILRAAWHIGNRHTPCQIEADRLVIRRDHVLEEMLRGLGLTLEPRTEPFRPEGGAYGHGRTLGHDHGPAQGHGHDHPHVHVHISHKPDEDETPDADPA</sequence>
<reference key="1">
    <citation type="journal article" date="2000" name="Nucleic Acids Res.">
        <title>DNA sequence analysis of the photosynthesis region of Rhodobacter sphaeroides 2.4.1.</title>
        <authorList>
            <person name="Choudhary M."/>
            <person name="Kaplan S."/>
        </authorList>
    </citation>
    <scope>NUCLEOTIDE SEQUENCE [GENOMIC DNA]</scope>
</reference>
<reference key="2">
    <citation type="submission" date="2005-09" db="EMBL/GenBank/DDBJ databases">
        <title>Complete sequence of chromosome 1 of Rhodobacter sphaeroides 2.4.1.</title>
        <authorList>
            <person name="Copeland A."/>
            <person name="Lucas S."/>
            <person name="Lapidus A."/>
            <person name="Barry K."/>
            <person name="Detter J.C."/>
            <person name="Glavina T."/>
            <person name="Hammon N."/>
            <person name="Israni S."/>
            <person name="Pitluck S."/>
            <person name="Richardson P."/>
            <person name="Mackenzie C."/>
            <person name="Choudhary M."/>
            <person name="Larimer F."/>
            <person name="Hauser L.J."/>
            <person name="Land M."/>
            <person name="Donohue T.J."/>
            <person name="Kaplan S."/>
        </authorList>
    </citation>
    <scope>NUCLEOTIDE SEQUENCE [LARGE SCALE GENOMIC DNA]</scope>
    <source>
        <strain>ATCC 17023 / DSM 158 / JCM 6121 / CCUG 31486 / LMG 2827 / NBRC 12203 / NCIMB 8253 / ATH 2.4.1.</strain>
    </source>
</reference>
<name>UREE_CERS4</name>
<protein>
    <recommendedName>
        <fullName evidence="1">Urease accessory protein UreE</fullName>
    </recommendedName>
</protein>
<dbReference type="EMBL" id="AF195122">
    <property type="protein sequence ID" value="AAF24256.1"/>
    <property type="molecule type" value="Genomic_DNA"/>
</dbReference>
<dbReference type="EMBL" id="CP000143">
    <property type="protein sequence ID" value="ABA79478.1"/>
    <property type="molecule type" value="Genomic_DNA"/>
</dbReference>
<dbReference type="PIR" id="T50712">
    <property type="entry name" value="T50712"/>
</dbReference>
<dbReference type="RefSeq" id="WP_002720469.1">
    <property type="nucleotide sequence ID" value="NZ_CP030271.1"/>
</dbReference>
<dbReference type="RefSeq" id="YP_353379.1">
    <property type="nucleotide sequence ID" value="NC_007493.2"/>
</dbReference>
<dbReference type="SMR" id="Q3J156"/>
<dbReference type="STRING" id="272943.RSP_0304"/>
<dbReference type="EnsemblBacteria" id="ABA79478">
    <property type="protein sequence ID" value="ABA79478"/>
    <property type="gene ID" value="RSP_0304"/>
</dbReference>
<dbReference type="GeneID" id="3719159"/>
<dbReference type="KEGG" id="rsp:RSP_0304"/>
<dbReference type="PATRIC" id="fig|272943.9.peg.2249"/>
<dbReference type="eggNOG" id="COG2371">
    <property type="taxonomic scope" value="Bacteria"/>
</dbReference>
<dbReference type="OrthoDB" id="9802215at2"/>
<dbReference type="PhylomeDB" id="Q3J156"/>
<dbReference type="Proteomes" id="UP000002703">
    <property type="component" value="Chromosome 1"/>
</dbReference>
<dbReference type="GO" id="GO:0005737">
    <property type="term" value="C:cytoplasm"/>
    <property type="evidence" value="ECO:0007669"/>
    <property type="project" value="UniProtKB-SubCell"/>
</dbReference>
<dbReference type="GO" id="GO:0016151">
    <property type="term" value="F:nickel cation binding"/>
    <property type="evidence" value="ECO:0007669"/>
    <property type="project" value="UniProtKB-UniRule"/>
</dbReference>
<dbReference type="GO" id="GO:0051082">
    <property type="term" value="F:unfolded protein binding"/>
    <property type="evidence" value="ECO:0007669"/>
    <property type="project" value="UniProtKB-UniRule"/>
</dbReference>
<dbReference type="GO" id="GO:0006457">
    <property type="term" value="P:protein folding"/>
    <property type="evidence" value="ECO:0007669"/>
    <property type="project" value="InterPro"/>
</dbReference>
<dbReference type="GO" id="GO:0065003">
    <property type="term" value="P:protein-containing complex assembly"/>
    <property type="evidence" value="ECO:0007669"/>
    <property type="project" value="InterPro"/>
</dbReference>
<dbReference type="GO" id="GO:0019627">
    <property type="term" value="P:urea metabolic process"/>
    <property type="evidence" value="ECO:0007669"/>
    <property type="project" value="InterPro"/>
</dbReference>
<dbReference type="CDD" id="cd00571">
    <property type="entry name" value="UreE"/>
    <property type="match status" value="1"/>
</dbReference>
<dbReference type="Gene3D" id="2.60.260.20">
    <property type="entry name" value="Urease metallochaperone UreE, N-terminal domain"/>
    <property type="match status" value="1"/>
</dbReference>
<dbReference type="Gene3D" id="3.30.70.790">
    <property type="entry name" value="UreE, C-terminal domain"/>
    <property type="match status" value="1"/>
</dbReference>
<dbReference type="HAMAP" id="MF_00822">
    <property type="entry name" value="UreE"/>
    <property type="match status" value="1"/>
</dbReference>
<dbReference type="InterPro" id="IPR012406">
    <property type="entry name" value="UreE"/>
</dbReference>
<dbReference type="InterPro" id="IPR007864">
    <property type="entry name" value="UreE_C_dom"/>
</dbReference>
<dbReference type="InterPro" id="IPR004029">
    <property type="entry name" value="UreE_N"/>
</dbReference>
<dbReference type="InterPro" id="IPR036118">
    <property type="entry name" value="UreE_N_sf"/>
</dbReference>
<dbReference type="NCBIfam" id="NF009758">
    <property type="entry name" value="PRK13261.2-4"/>
    <property type="match status" value="1"/>
</dbReference>
<dbReference type="Pfam" id="PF05194">
    <property type="entry name" value="UreE_C"/>
    <property type="match status" value="1"/>
</dbReference>
<dbReference type="Pfam" id="PF02814">
    <property type="entry name" value="UreE_N"/>
    <property type="match status" value="1"/>
</dbReference>
<dbReference type="SMART" id="SM00988">
    <property type="entry name" value="UreE_N"/>
    <property type="match status" value="1"/>
</dbReference>
<dbReference type="SUPFAM" id="SSF69737">
    <property type="entry name" value="Urease metallochaperone UreE, C-terminal domain"/>
    <property type="match status" value="1"/>
</dbReference>
<dbReference type="SUPFAM" id="SSF69287">
    <property type="entry name" value="Urease metallochaperone UreE, N-terminal domain"/>
    <property type="match status" value="1"/>
</dbReference>
<proteinExistence type="inferred from homology"/>